<sequence>MSKAQTLSAADRAKLEGLIGHDFAEKERLDRALTHASARTEKGGNYERLEFLGDRVLGLCIAELLFRTFGTAGEGELSVRLNQLVSAETCAAVADELNLHLYIRTGADVKKLTGKRMMNVRADVVESLIAAIYLDGGLEVARRFILRYWQGRAVRADGAKRDAKTELQEWSHAKFGVTPNYRVDERSGPDHDPRFKVTVEVAGIKPETGVERSKRAAEQVAATKMLEREGIWQQSPAGN</sequence>
<reference key="1">
    <citation type="journal article" date="2010" name="Stand. Genomic Sci.">
        <title>Complete genome sequence of Rhizobium leguminosarum bv trifolii strain WSM2304, an effective microsymbiont of the South American clover Trifolium polymorphum.</title>
        <authorList>
            <person name="Reeve W."/>
            <person name="O'Hara G."/>
            <person name="Chain P."/>
            <person name="Ardley J."/>
            <person name="Brau L."/>
            <person name="Nandesena K."/>
            <person name="Tiwari R."/>
            <person name="Malfatti S."/>
            <person name="Kiss H."/>
            <person name="Lapidus A."/>
            <person name="Copeland A."/>
            <person name="Nolan M."/>
            <person name="Land M."/>
            <person name="Ivanova N."/>
            <person name="Mavromatis K."/>
            <person name="Markowitz V."/>
            <person name="Kyrpides N."/>
            <person name="Melino V."/>
            <person name="Denton M."/>
            <person name="Yates R."/>
            <person name="Howieson J."/>
        </authorList>
    </citation>
    <scope>NUCLEOTIDE SEQUENCE [LARGE SCALE GENOMIC DNA]</scope>
    <source>
        <strain>WSM2304</strain>
    </source>
</reference>
<comment type="function">
    <text evidence="1">Digests double-stranded RNA. Involved in the processing of primary rRNA transcript to yield the immediate precursors to the large and small rRNAs (23S and 16S). Processes some mRNAs, and tRNAs when they are encoded in the rRNA operon. Processes pre-crRNA and tracrRNA of type II CRISPR loci if present in the organism.</text>
</comment>
<comment type="catalytic activity">
    <reaction evidence="1">
        <text>Endonucleolytic cleavage to 5'-phosphomonoester.</text>
        <dbReference type="EC" id="3.1.26.3"/>
    </reaction>
</comment>
<comment type="cofactor">
    <cofactor evidence="1">
        <name>Mg(2+)</name>
        <dbReference type="ChEBI" id="CHEBI:18420"/>
    </cofactor>
</comment>
<comment type="subunit">
    <text evidence="1">Homodimer.</text>
</comment>
<comment type="subcellular location">
    <subcellularLocation>
        <location evidence="1">Cytoplasm</location>
    </subcellularLocation>
</comment>
<comment type="similarity">
    <text evidence="1">Belongs to the ribonuclease III family.</text>
</comment>
<organism>
    <name type="scientific">Rhizobium leguminosarum bv. trifolii (strain WSM2304)</name>
    <dbReference type="NCBI Taxonomy" id="395492"/>
    <lineage>
        <taxon>Bacteria</taxon>
        <taxon>Pseudomonadati</taxon>
        <taxon>Pseudomonadota</taxon>
        <taxon>Alphaproteobacteria</taxon>
        <taxon>Hyphomicrobiales</taxon>
        <taxon>Rhizobiaceae</taxon>
        <taxon>Rhizobium/Agrobacterium group</taxon>
        <taxon>Rhizobium</taxon>
    </lineage>
</organism>
<feature type="chain" id="PRO_1000094128" description="Ribonuclease 3">
    <location>
        <begin position="1"/>
        <end position="239"/>
    </location>
</feature>
<feature type="domain" description="RNase III" evidence="1">
    <location>
        <begin position="12"/>
        <end position="137"/>
    </location>
</feature>
<feature type="domain" description="DRBM" evidence="1">
    <location>
        <begin position="162"/>
        <end position="231"/>
    </location>
</feature>
<feature type="active site" evidence="1">
    <location>
        <position position="54"/>
    </location>
</feature>
<feature type="active site" evidence="1">
    <location>
        <position position="126"/>
    </location>
</feature>
<feature type="binding site" evidence="1">
    <location>
        <position position="50"/>
    </location>
    <ligand>
        <name>Mg(2+)</name>
        <dbReference type="ChEBI" id="CHEBI:18420"/>
    </ligand>
</feature>
<feature type="binding site" evidence="1">
    <location>
        <position position="123"/>
    </location>
    <ligand>
        <name>Mg(2+)</name>
        <dbReference type="ChEBI" id="CHEBI:18420"/>
    </ligand>
</feature>
<feature type="binding site" evidence="1">
    <location>
        <position position="126"/>
    </location>
    <ligand>
        <name>Mg(2+)</name>
        <dbReference type="ChEBI" id="CHEBI:18420"/>
    </ligand>
</feature>
<name>RNC_RHILW</name>
<keyword id="KW-0963">Cytoplasm</keyword>
<keyword id="KW-0255">Endonuclease</keyword>
<keyword id="KW-0378">Hydrolase</keyword>
<keyword id="KW-0460">Magnesium</keyword>
<keyword id="KW-0479">Metal-binding</keyword>
<keyword id="KW-0507">mRNA processing</keyword>
<keyword id="KW-0540">Nuclease</keyword>
<keyword id="KW-1185">Reference proteome</keyword>
<keyword id="KW-0694">RNA-binding</keyword>
<keyword id="KW-0698">rRNA processing</keyword>
<keyword id="KW-0699">rRNA-binding</keyword>
<keyword id="KW-0819">tRNA processing</keyword>
<protein>
    <recommendedName>
        <fullName evidence="1">Ribonuclease 3</fullName>
        <ecNumber evidence="1">3.1.26.3</ecNumber>
    </recommendedName>
    <alternativeName>
        <fullName evidence="1">Ribonuclease III</fullName>
        <shortName evidence="1">RNase III</shortName>
    </alternativeName>
</protein>
<accession>B5ZW73</accession>
<evidence type="ECO:0000255" key="1">
    <source>
        <dbReference type="HAMAP-Rule" id="MF_00104"/>
    </source>
</evidence>
<gene>
    <name evidence="1" type="primary">rnc</name>
    <name type="ordered locus">Rleg2_0998</name>
</gene>
<proteinExistence type="inferred from homology"/>
<dbReference type="EC" id="3.1.26.3" evidence="1"/>
<dbReference type="EMBL" id="CP001191">
    <property type="protein sequence ID" value="ACI54292.1"/>
    <property type="molecule type" value="Genomic_DNA"/>
</dbReference>
<dbReference type="RefSeq" id="WP_003578269.1">
    <property type="nucleotide sequence ID" value="NC_011369.1"/>
</dbReference>
<dbReference type="SMR" id="B5ZW73"/>
<dbReference type="STRING" id="395492.Rleg2_0998"/>
<dbReference type="KEGG" id="rlt:Rleg2_0998"/>
<dbReference type="eggNOG" id="COG0571">
    <property type="taxonomic scope" value="Bacteria"/>
</dbReference>
<dbReference type="HOGENOM" id="CLU_000907_1_1_5"/>
<dbReference type="Proteomes" id="UP000008330">
    <property type="component" value="Chromosome"/>
</dbReference>
<dbReference type="GO" id="GO:0005737">
    <property type="term" value="C:cytoplasm"/>
    <property type="evidence" value="ECO:0007669"/>
    <property type="project" value="UniProtKB-SubCell"/>
</dbReference>
<dbReference type="GO" id="GO:0003725">
    <property type="term" value="F:double-stranded RNA binding"/>
    <property type="evidence" value="ECO:0007669"/>
    <property type="project" value="TreeGrafter"/>
</dbReference>
<dbReference type="GO" id="GO:0046872">
    <property type="term" value="F:metal ion binding"/>
    <property type="evidence" value="ECO:0007669"/>
    <property type="project" value="UniProtKB-KW"/>
</dbReference>
<dbReference type="GO" id="GO:0004525">
    <property type="term" value="F:ribonuclease III activity"/>
    <property type="evidence" value="ECO:0007669"/>
    <property type="project" value="UniProtKB-UniRule"/>
</dbReference>
<dbReference type="GO" id="GO:0019843">
    <property type="term" value="F:rRNA binding"/>
    <property type="evidence" value="ECO:0007669"/>
    <property type="project" value="UniProtKB-KW"/>
</dbReference>
<dbReference type="GO" id="GO:0006397">
    <property type="term" value="P:mRNA processing"/>
    <property type="evidence" value="ECO:0007669"/>
    <property type="project" value="UniProtKB-UniRule"/>
</dbReference>
<dbReference type="GO" id="GO:0010468">
    <property type="term" value="P:regulation of gene expression"/>
    <property type="evidence" value="ECO:0007669"/>
    <property type="project" value="TreeGrafter"/>
</dbReference>
<dbReference type="GO" id="GO:0006364">
    <property type="term" value="P:rRNA processing"/>
    <property type="evidence" value="ECO:0007669"/>
    <property type="project" value="UniProtKB-UniRule"/>
</dbReference>
<dbReference type="GO" id="GO:0008033">
    <property type="term" value="P:tRNA processing"/>
    <property type="evidence" value="ECO:0007669"/>
    <property type="project" value="UniProtKB-KW"/>
</dbReference>
<dbReference type="CDD" id="cd10845">
    <property type="entry name" value="DSRM_RNAse_III_family"/>
    <property type="match status" value="1"/>
</dbReference>
<dbReference type="CDD" id="cd00593">
    <property type="entry name" value="RIBOc"/>
    <property type="match status" value="1"/>
</dbReference>
<dbReference type="Gene3D" id="3.30.160.20">
    <property type="match status" value="1"/>
</dbReference>
<dbReference type="Gene3D" id="1.10.1520.10">
    <property type="entry name" value="Ribonuclease III domain"/>
    <property type="match status" value="1"/>
</dbReference>
<dbReference type="HAMAP" id="MF_00104">
    <property type="entry name" value="RNase_III"/>
    <property type="match status" value="1"/>
</dbReference>
<dbReference type="InterPro" id="IPR014720">
    <property type="entry name" value="dsRBD_dom"/>
</dbReference>
<dbReference type="InterPro" id="IPR011907">
    <property type="entry name" value="RNase_III"/>
</dbReference>
<dbReference type="InterPro" id="IPR000999">
    <property type="entry name" value="RNase_III_dom"/>
</dbReference>
<dbReference type="InterPro" id="IPR036389">
    <property type="entry name" value="RNase_III_sf"/>
</dbReference>
<dbReference type="NCBIfam" id="TIGR02191">
    <property type="entry name" value="RNaseIII"/>
    <property type="match status" value="1"/>
</dbReference>
<dbReference type="PANTHER" id="PTHR11207:SF0">
    <property type="entry name" value="RIBONUCLEASE 3"/>
    <property type="match status" value="1"/>
</dbReference>
<dbReference type="PANTHER" id="PTHR11207">
    <property type="entry name" value="RIBONUCLEASE III"/>
    <property type="match status" value="1"/>
</dbReference>
<dbReference type="Pfam" id="PF00035">
    <property type="entry name" value="dsrm"/>
    <property type="match status" value="1"/>
</dbReference>
<dbReference type="Pfam" id="PF14622">
    <property type="entry name" value="Ribonucleas_3_3"/>
    <property type="match status" value="1"/>
</dbReference>
<dbReference type="SMART" id="SM00358">
    <property type="entry name" value="DSRM"/>
    <property type="match status" value="1"/>
</dbReference>
<dbReference type="SMART" id="SM00535">
    <property type="entry name" value="RIBOc"/>
    <property type="match status" value="1"/>
</dbReference>
<dbReference type="SUPFAM" id="SSF54768">
    <property type="entry name" value="dsRNA-binding domain-like"/>
    <property type="match status" value="1"/>
</dbReference>
<dbReference type="SUPFAM" id="SSF69065">
    <property type="entry name" value="RNase III domain-like"/>
    <property type="match status" value="1"/>
</dbReference>
<dbReference type="PROSITE" id="PS50137">
    <property type="entry name" value="DS_RBD"/>
    <property type="match status" value="1"/>
</dbReference>
<dbReference type="PROSITE" id="PS00517">
    <property type="entry name" value="RNASE_3_1"/>
    <property type="match status" value="1"/>
</dbReference>
<dbReference type="PROSITE" id="PS50142">
    <property type="entry name" value="RNASE_3_2"/>
    <property type="match status" value="1"/>
</dbReference>